<comment type="function">
    <text evidence="1">Probable acetyltransferase, which acetylates the inositol ring of phosphatidylinositol during biosynthesis of GPI-anchor.</text>
</comment>
<comment type="pathway">
    <text>Glycolipid biosynthesis; glycosylphosphatidylinositol-anchor biosynthesis.</text>
</comment>
<comment type="subcellular location">
    <subcellularLocation>
        <location evidence="1">Endoplasmic reticulum membrane</location>
        <topology evidence="1">Multi-pass membrane protein</topology>
    </subcellularLocation>
</comment>
<comment type="similarity">
    <text evidence="4">Belongs to the PIGW family.</text>
</comment>
<accession>Q4IQ08</accession>
<accession>A0A098D182</accession>
<accession>A0A0E0RN58</accession>
<accession>V6QUB9</accession>
<sequence>MPDTASYKQQKEDFVSNLSGGSVAEINYVTSVAAVAILLWSVLQARQSFFEPYTALAFAVDFLLNVGAILLSVTLYSNSPLLLNLLLIAPAILVFTLPPRSRSPKKKAKIPPNARSNESSGQLDILSTKPFLTNFRGCMLIVTCVAILAVDFRLFPRRFAKVETWGTSLMDLGVGSFVFSAGLVAARPVLREKATGRAGAVGNALSLSSRLVQSLRHSIPLLVLGFIRFLSVKGLDYAEHVTEYGVHWNFFFTLGFLPPFVAIFQSVRKLIPSFAALSLLVGVTYQVLLETTSLKAYVLTAPRTDLISMNREGIFSFVGYLAIFLAGQDTGMFVIPRNLVPKSTASPGAQRNKLLKITAVWGGVWTGLYVLSTNYHYGFGLAVSRRMANLPYVLWVVAFNTIQLLGFAVIDTIFFPAFYNAQDAKTEKEAYTHATSRVMRAYNRNGLAVFLLANLLTGLVNMTVNTLDATPIATMGILVVYSAALTGVAVALDAYNISIKL</sequence>
<organism>
    <name type="scientific">Gibberella zeae (strain ATCC MYA-4620 / CBS 123657 / FGSC 9075 / NRRL 31084 / PH-1)</name>
    <name type="common">Wheat head blight fungus</name>
    <name type="synonym">Fusarium graminearum</name>
    <dbReference type="NCBI Taxonomy" id="229533"/>
    <lineage>
        <taxon>Eukaryota</taxon>
        <taxon>Fungi</taxon>
        <taxon>Dikarya</taxon>
        <taxon>Ascomycota</taxon>
        <taxon>Pezizomycotina</taxon>
        <taxon>Sordariomycetes</taxon>
        <taxon>Hypocreomycetidae</taxon>
        <taxon>Hypocreales</taxon>
        <taxon>Nectriaceae</taxon>
        <taxon>Fusarium</taxon>
    </lineage>
</organism>
<proteinExistence type="inferred from homology"/>
<evidence type="ECO:0000250" key="1"/>
<evidence type="ECO:0000255" key="2"/>
<evidence type="ECO:0000256" key="3">
    <source>
        <dbReference type="SAM" id="MobiDB-lite"/>
    </source>
</evidence>
<evidence type="ECO:0000305" key="4"/>
<feature type="chain" id="PRO_0000246291" description="GPI-anchored wall transfer protein 1">
    <location>
        <begin position="1"/>
        <end position="501"/>
    </location>
</feature>
<feature type="transmembrane region" description="Helical" evidence="2">
    <location>
        <begin position="23"/>
        <end position="43"/>
    </location>
</feature>
<feature type="transmembrane region" description="Helical" evidence="2">
    <location>
        <begin position="55"/>
        <end position="75"/>
    </location>
</feature>
<feature type="transmembrane region" description="Helical" evidence="2">
    <location>
        <begin position="79"/>
        <end position="99"/>
    </location>
</feature>
<feature type="transmembrane region" description="Helical" evidence="2">
    <location>
        <begin position="130"/>
        <end position="150"/>
    </location>
</feature>
<feature type="transmembrane region" description="Helical" evidence="2">
    <location>
        <begin position="165"/>
        <end position="185"/>
    </location>
</feature>
<feature type="transmembrane region" description="Helical" evidence="2">
    <location>
        <begin position="218"/>
        <end position="238"/>
    </location>
</feature>
<feature type="transmembrane region" description="Helical" evidence="2">
    <location>
        <begin position="244"/>
        <end position="264"/>
    </location>
</feature>
<feature type="transmembrane region" description="Helical" evidence="2">
    <location>
        <begin position="270"/>
        <end position="290"/>
    </location>
</feature>
<feature type="transmembrane region" description="Helical" evidence="2">
    <location>
        <begin position="314"/>
        <end position="334"/>
    </location>
</feature>
<feature type="transmembrane region" description="Helical" evidence="2">
    <location>
        <begin position="363"/>
        <end position="383"/>
    </location>
</feature>
<feature type="transmembrane region" description="Helical" evidence="2">
    <location>
        <begin position="390"/>
        <end position="410"/>
    </location>
</feature>
<feature type="transmembrane region" description="Helical" evidence="2">
    <location>
        <begin position="447"/>
        <end position="467"/>
    </location>
</feature>
<feature type="transmembrane region" description="Helical" evidence="2">
    <location>
        <begin position="472"/>
        <end position="492"/>
    </location>
</feature>
<feature type="region of interest" description="Disordered" evidence="3">
    <location>
        <begin position="101"/>
        <end position="121"/>
    </location>
</feature>
<feature type="glycosylation site" description="N-linked (GlcNAc...) asparagine" evidence="2">
    <location>
        <position position="17"/>
    </location>
</feature>
<feature type="glycosylation site" description="N-linked (GlcNAc...) asparagine" evidence="2">
    <location>
        <position position="117"/>
    </location>
</feature>
<feature type="glycosylation site" description="N-linked (GlcNAc...) asparagine" evidence="2">
    <location>
        <position position="496"/>
    </location>
</feature>
<dbReference type="EC" id="2.3.-.-"/>
<dbReference type="EMBL" id="DS231663">
    <property type="protein sequence ID" value="ESU05918.1"/>
    <property type="molecule type" value="Genomic_DNA"/>
</dbReference>
<dbReference type="EMBL" id="HG970332">
    <property type="protein sequence ID" value="CEF72683.1"/>
    <property type="molecule type" value="Genomic_DNA"/>
</dbReference>
<dbReference type="RefSeq" id="XP_011316403.1">
    <property type="nucleotide sequence ID" value="XM_011318101.1"/>
</dbReference>
<dbReference type="SMR" id="Q4IQ08"/>
<dbReference type="FunCoup" id="Q4IQ08">
    <property type="interactions" value="570"/>
</dbReference>
<dbReference type="STRING" id="229533.Q4IQ08"/>
<dbReference type="GlyCosmos" id="Q4IQ08">
    <property type="glycosylation" value="3 sites, No reported glycans"/>
</dbReference>
<dbReference type="GeneID" id="23548178"/>
<dbReference type="KEGG" id="fgr:FGSG_00700"/>
<dbReference type="VEuPathDB" id="FungiDB:FGRAMPH1_01G01765"/>
<dbReference type="eggNOG" id="KOG0411">
    <property type="taxonomic scope" value="Eukaryota"/>
</dbReference>
<dbReference type="HOGENOM" id="CLU_020802_2_2_1"/>
<dbReference type="InParanoid" id="Q4IQ08"/>
<dbReference type="OrthoDB" id="93908at110618"/>
<dbReference type="UniPathway" id="UPA00196"/>
<dbReference type="Proteomes" id="UP000070720">
    <property type="component" value="Chromosome 1"/>
</dbReference>
<dbReference type="GO" id="GO:0005789">
    <property type="term" value="C:endoplasmic reticulum membrane"/>
    <property type="evidence" value="ECO:0007669"/>
    <property type="project" value="UniProtKB-SubCell"/>
</dbReference>
<dbReference type="GO" id="GO:0032216">
    <property type="term" value="F:glucosaminyl-phosphatidylinositol O-acyltransferase activity"/>
    <property type="evidence" value="ECO:0007669"/>
    <property type="project" value="TreeGrafter"/>
</dbReference>
<dbReference type="GO" id="GO:0006506">
    <property type="term" value="P:GPI anchor biosynthetic process"/>
    <property type="evidence" value="ECO:0007669"/>
    <property type="project" value="UniProtKB-UniPathway"/>
</dbReference>
<dbReference type="GO" id="GO:0072659">
    <property type="term" value="P:protein localization to plasma membrane"/>
    <property type="evidence" value="ECO:0007669"/>
    <property type="project" value="TreeGrafter"/>
</dbReference>
<dbReference type="InterPro" id="IPR009447">
    <property type="entry name" value="PIGW/GWT1"/>
</dbReference>
<dbReference type="PANTHER" id="PTHR20661">
    <property type="entry name" value="PHOSPHATIDYLINOSITOL-GLYCAN BIOSYNTHESIS CLASS W PROTEIN"/>
    <property type="match status" value="1"/>
</dbReference>
<dbReference type="PANTHER" id="PTHR20661:SF0">
    <property type="entry name" value="PHOSPHATIDYLINOSITOL-GLYCAN BIOSYNTHESIS CLASS W PROTEIN"/>
    <property type="match status" value="1"/>
</dbReference>
<dbReference type="Pfam" id="PF06423">
    <property type="entry name" value="GWT1"/>
    <property type="match status" value="1"/>
</dbReference>
<dbReference type="PIRSF" id="PIRSF017321">
    <property type="entry name" value="GWT1"/>
    <property type="match status" value="1"/>
</dbReference>
<gene>
    <name type="primary">GWT1</name>
    <name type="ORF">FGRRES_00700</name>
    <name type="ORF">FGSG_00700</name>
</gene>
<reference key="1">
    <citation type="journal article" date="2007" name="Science">
        <title>The Fusarium graminearum genome reveals a link between localized polymorphism and pathogen specialization.</title>
        <authorList>
            <person name="Cuomo C.A."/>
            <person name="Gueldener U."/>
            <person name="Xu J.-R."/>
            <person name="Trail F."/>
            <person name="Turgeon B.G."/>
            <person name="Di Pietro A."/>
            <person name="Walton J.D."/>
            <person name="Ma L.-J."/>
            <person name="Baker S.E."/>
            <person name="Rep M."/>
            <person name="Adam G."/>
            <person name="Antoniw J."/>
            <person name="Baldwin T."/>
            <person name="Calvo S.E."/>
            <person name="Chang Y.-L."/>
            <person name="DeCaprio D."/>
            <person name="Gale L.R."/>
            <person name="Gnerre S."/>
            <person name="Goswami R.S."/>
            <person name="Hammond-Kosack K."/>
            <person name="Harris L.J."/>
            <person name="Hilburn K."/>
            <person name="Kennell J.C."/>
            <person name="Kroken S."/>
            <person name="Magnuson J.K."/>
            <person name="Mannhaupt G."/>
            <person name="Mauceli E.W."/>
            <person name="Mewes H.-W."/>
            <person name="Mitterbauer R."/>
            <person name="Muehlbauer G."/>
            <person name="Muensterkoetter M."/>
            <person name="Nelson D."/>
            <person name="O'Donnell K."/>
            <person name="Ouellet T."/>
            <person name="Qi W."/>
            <person name="Quesneville H."/>
            <person name="Roncero M.I.G."/>
            <person name="Seong K.-Y."/>
            <person name="Tetko I.V."/>
            <person name="Urban M."/>
            <person name="Waalwijk C."/>
            <person name="Ward T.J."/>
            <person name="Yao J."/>
            <person name="Birren B.W."/>
            <person name="Kistler H.C."/>
        </authorList>
    </citation>
    <scope>NUCLEOTIDE SEQUENCE [LARGE SCALE GENOMIC DNA]</scope>
    <source>
        <strain>ATCC MYA-4620 / CBS 123657 / FGSC 9075 / NRRL 31084 / PH-1</strain>
    </source>
</reference>
<reference key="2">
    <citation type="journal article" date="2010" name="Nature">
        <title>Comparative genomics reveals mobile pathogenicity chromosomes in Fusarium.</title>
        <authorList>
            <person name="Ma L.-J."/>
            <person name="van der Does H.C."/>
            <person name="Borkovich K.A."/>
            <person name="Coleman J.J."/>
            <person name="Daboussi M.-J."/>
            <person name="Di Pietro A."/>
            <person name="Dufresne M."/>
            <person name="Freitag M."/>
            <person name="Grabherr M."/>
            <person name="Henrissat B."/>
            <person name="Houterman P.M."/>
            <person name="Kang S."/>
            <person name="Shim W.-B."/>
            <person name="Woloshuk C."/>
            <person name="Xie X."/>
            <person name="Xu J.-R."/>
            <person name="Antoniw J."/>
            <person name="Baker S.E."/>
            <person name="Bluhm B.H."/>
            <person name="Breakspear A."/>
            <person name="Brown D.W."/>
            <person name="Butchko R.A.E."/>
            <person name="Chapman S."/>
            <person name="Coulson R."/>
            <person name="Coutinho P.M."/>
            <person name="Danchin E.G.J."/>
            <person name="Diener A."/>
            <person name="Gale L.R."/>
            <person name="Gardiner D.M."/>
            <person name="Goff S."/>
            <person name="Hammond-Kosack K.E."/>
            <person name="Hilburn K."/>
            <person name="Hua-Van A."/>
            <person name="Jonkers W."/>
            <person name="Kazan K."/>
            <person name="Kodira C.D."/>
            <person name="Koehrsen M."/>
            <person name="Kumar L."/>
            <person name="Lee Y.-H."/>
            <person name="Li L."/>
            <person name="Manners J.M."/>
            <person name="Miranda-Saavedra D."/>
            <person name="Mukherjee M."/>
            <person name="Park G."/>
            <person name="Park J."/>
            <person name="Park S.-Y."/>
            <person name="Proctor R.H."/>
            <person name="Regev A."/>
            <person name="Ruiz-Roldan M.C."/>
            <person name="Sain D."/>
            <person name="Sakthikumar S."/>
            <person name="Sykes S."/>
            <person name="Schwartz D.C."/>
            <person name="Turgeon B.G."/>
            <person name="Wapinski I."/>
            <person name="Yoder O."/>
            <person name="Young S."/>
            <person name="Zeng Q."/>
            <person name="Zhou S."/>
            <person name="Galagan J."/>
            <person name="Cuomo C.A."/>
            <person name="Kistler H.C."/>
            <person name="Rep M."/>
        </authorList>
    </citation>
    <scope>GENOME REANNOTATION</scope>
    <source>
        <strain>ATCC MYA-4620 / CBS 123657 / FGSC 9075 / NRRL 31084 / PH-1</strain>
    </source>
</reference>
<reference key="3">
    <citation type="journal article" date="2015" name="BMC Genomics">
        <title>The completed genome sequence of the pathogenic ascomycete fungus Fusarium graminearum.</title>
        <authorList>
            <person name="King R."/>
            <person name="Urban M."/>
            <person name="Hammond-Kosack M.C.U."/>
            <person name="Hassani-Pak K."/>
            <person name="Hammond-Kosack K.E."/>
        </authorList>
    </citation>
    <scope>NUCLEOTIDE SEQUENCE [LARGE SCALE GENOMIC DNA]</scope>
    <source>
        <strain>ATCC MYA-4620 / CBS 123657 / FGSC 9075 / NRRL 31084 / PH-1</strain>
    </source>
</reference>
<keyword id="KW-0012">Acyltransferase</keyword>
<keyword id="KW-0256">Endoplasmic reticulum</keyword>
<keyword id="KW-0325">Glycoprotein</keyword>
<keyword id="KW-0337">GPI-anchor biosynthesis</keyword>
<keyword id="KW-0472">Membrane</keyword>
<keyword id="KW-1185">Reference proteome</keyword>
<keyword id="KW-0808">Transferase</keyword>
<keyword id="KW-0812">Transmembrane</keyword>
<keyword id="KW-1133">Transmembrane helix</keyword>
<name>GWT1_GIBZE</name>
<protein>
    <recommendedName>
        <fullName>GPI-anchored wall transfer protein 1</fullName>
        <ecNumber>2.3.-.-</ecNumber>
    </recommendedName>
</protein>